<name>FGL2_BOVIN</name>
<reference key="1">
    <citation type="submission" date="2006-02" db="EMBL/GenBank/DDBJ databases">
        <authorList>
            <consortium name="NIH - Mammalian Gene Collection (MGC) project"/>
        </authorList>
    </citation>
    <scope>NUCLEOTIDE SEQUENCE [LARGE SCALE MRNA]</scope>
    <source>
        <strain>Hereford</strain>
        <tissue>Uterus</tissue>
    </source>
</reference>
<organism>
    <name type="scientific">Bos taurus</name>
    <name type="common">Bovine</name>
    <dbReference type="NCBI Taxonomy" id="9913"/>
    <lineage>
        <taxon>Eukaryota</taxon>
        <taxon>Metazoa</taxon>
        <taxon>Chordata</taxon>
        <taxon>Craniata</taxon>
        <taxon>Vertebrata</taxon>
        <taxon>Euteleostomi</taxon>
        <taxon>Mammalia</taxon>
        <taxon>Eutheria</taxon>
        <taxon>Laurasiatheria</taxon>
        <taxon>Artiodactyla</taxon>
        <taxon>Ruminantia</taxon>
        <taxon>Pecora</taxon>
        <taxon>Bovidae</taxon>
        <taxon>Bovinae</taxon>
        <taxon>Bos</taxon>
    </lineage>
</organism>
<proteinExistence type="evidence at transcript level"/>
<keyword id="KW-0175">Coiled coil</keyword>
<keyword id="KW-1015">Disulfide bond</keyword>
<keyword id="KW-0325">Glycoprotein</keyword>
<keyword id="KW-1185">Reference proteome</keyword>
<keyword id="KW-0964">Secreted</keyword>
<keyword id="KW-0732">Signal</keyword>
<evidence type="ECO:0000250" key="1"/>
<evidence type="ECO:0000255" key="2"/>
<evidence type="ECO:0000255" key="3">
    <source>
        <dbReference type="PROSITE-ProRule" id="PRU00739"/>
    </source>
</evidence>
<evidence type="ECO:0000256" key="4">
    <source>
        <dbReference type="SAM" id="MobiDB-lite"/>
    </source>
</evidence>
<sequence>MKLANWCWLSSTVLATYGFLVVANNETEEIKDEAAQNACRVRLESRGRCEEEGECPYQVNLPPLTIQLPKQFSRIEEVFKEVQNLKEIVNSLKKTCQDCKLQADDSRDPGRNGLLLPGTGAPGETGDNRVRELEGEVNKLSSDLKNAKEEIDVLQGRLEKLNLVNMNNIEQYVDSKVANLTFVVNSLDGKCSSKCPRQEQIQSLPVQQHLIYKDCSEYYTIGKRSSELYRVTPEPRNSSFEVFCDMETMAGGWTVLQARVDGSTNFTRTWQDYKVGFGNLRREFWLGNDKIHLLTKSKDMILRIDLEDFNGIKLYALYDHFYVANEFLKYRLHIGNYNGTAGDALRFSKHYNHDLKFFTTPDRDNDRYPSGNCGLYYSSGWWFDACLSANLNGKYYHQKYRGVRNGIFWGTWPGISEAQPGGYKSSFKEVKMMIRPKHFKP</sequence>
<gene>
    <name type="primary">FGL2</name>
</gene>
<protein>
    <recommendedName>
        <fullName>Fibroleukin</fullName>
    </recommendedName>
    <alternativeName>
        <fullName>Fibrinogen-like protein 2</fullName>
    </alternativeName>
</protein>
<feature type="signal peptide" evidence="2">
    <location>
        <begin position="1"/>
        <end position="15"/>
    </location>
</feature>
<feature type="chain" id="PRO_0000244381" description="Fibroleukin">
    <location>
        <begin position="16"/>
        <end position="441"/>
    </location>
</feature>
<feature type="domain" description="Fibrinogen C-terminal" evidence="3">
    <location>
        <begin position="206"/>
        <end position="438"/>
    </location>
</feature>
<feature type="region of interest" description="Disordered" evidence="4">
    <location>
        <begin position="102"/>
        <end position="128"/>
    </location>
</feature>
<feature type="coiled-coil region" evidence="2">
    <location>
        <begin position="73"/>
        <end position="167"/>
    </location>
</feature>
<feature type="glycosylation site" description="N-linked (GlcNAc...) asparagine" evidence="2">
    <location>
        <position position="25"/>
    </location>
</feature>
<feature type="glycosylation site" description="N-linked (GlcNAc...) asparagine" evidence="2">
    <location>
        <position position="179"/>
    </location>
</feature>
<feature type="glycosylation site" description="N-linked (GlcNAc...) asparagine" evidence="2">
    <location>
        <position position="237"/>
    </location>
</feature>
<feature type="glycosylation site" description="N-linked (GlcNAc...) asparagine" evidence="2">
    <location>
        <position position="265"/>
    </location>
</feature>
<feature type="glycosylation site" description="N-linked (GlcNAc...) asparagine" evidence="2">
    <location>
        <position position="338"/>
    </location>
</feature>
<accession>Q29RY7</accession>
<dbReference type="EMBL" id="BC113335">
    <property type="protein sequence ID" value="AAI13336.1"/>
    <property type="molecule type" value="mRNA"/>
</dbReference>
<dbReference type="RefSeq" id="NP_001039562.1">
    <property type="nucleotide sequence ID" value="NM_001046097.1"/>
</dbReference>
<dbReference type="SMR" id="Q29RY7"/>
<dbReference type="FunCoup" id="Q29RY7">
    <property type="interactions" value="37"/>
</dbReference>
<dbReference type="STRING" id="9913.ENSBTAP00000012815"/>
<dbReference type="GlyCosmos" id="Q29RY7">
    <property type="glycosylation" value="5 sites, No reported glycans"/>
</dbReference>
<dbReference type="GlyGen" id="Q29RY7">
    <property type="glycosylation" value="5 sites"/>
</dbReference>
<dbReference type="PaxDb" id="9913-ENSBTAP00000012815"/>
<dbReference type="Ensembl" id="ENSBTAT00000012815.6">
    <property type="protein sequence ID" value="ENSBTAP00000012815.4"/>
    <property type="gene ID" value="ENSBTAG00000009717.6"/>
</dbReference>
<dbReference type="GeneID" id="511711"/>
<dbReference type="KEGG" id="bta:511711"/>
<dbReference type="CTD" id="10875"/>
<dbReference type="VEuPathDB" id="HostDB:ENSBTAG00000009717"/>
<dbReference type="VGNC" id="VGNC:28993">
    <property type="gene designation" value="FGL2"/>
</dbReference>
<dbReference type="eggNOG" id="KOG2579">
    <property type="taxonomic scope" value="Eukaryota"/>
</dbReference>
<dbReference type="GeneTree" id="ENSGT00940000157946"/>
<dbReference type="HOGENOM" id="CLU_038628_3_0_1"/>
<dbReference type="InParanoid" id="Q29RY7"/>
<dbReference type="OMA" id="MQRDCAD"/>
<dbReference type="OrthoDB" id="6514358at2759"/>
<dbReference type="TreeFam" id="TF336658"/>
<dbReference type="Reactome" id="R-BTA-6798695">
    <property type="pathway name" value="Neutrophil degranulation"/>
</dbReference>
<dbReference type="Proteomes" id="UP000009136">
    <property type="component" value="Chromosome 4"/>
</dbReference>
<dbReference type="Bgee" id="ENSBTAG00000009717">
    <property type="expression patterns" value="Expressed in neutrophil and 104 other cell types or tissues"/>
</dbReference>
<dbReference type="GO" id="GO:0009986">
    <property type="term" value="C:cell surface"/>
    <property type="evidence" value="ECO:0000250"/>
    <property type="project" value="AgBase"/>
</dbReference>
<dbReference type="GO" id="GO:0062023">
    <property type="term" value="C:collagen-containing extracellular matrix"/>
    <property type="evidence" value="ECO:0000318"/>
    <property type="project" value="GO_Central"/>
</dbReference>
<dbReference type="GO" id="GO:0005615">
    <property type="term" value="C:extracellular space"/>
    <property type="evidence" value="ECO:0000318"/>
    <property type="project" value="GO_Central"/>
</dbReference>
<dbReference type="GO" id="GO:0016504">
    <property type="term" value="F:peptidase activator activity"/>
    <property type="evidence" value="ECO:0000250"/>
    <property type="project" value="AgBase"/>
</dbReference>
<dbReference type="CDD" id="cd00087">
    <property type="entry name" value="FReD"/>
    <property type="match status" value="1"/>
</dbReference>
<dbReference type="FunFam" id="3.90.215.10:FF:000007">
    <property type="entry name" value="Fibrinogen-like 2"/>
    <property type="match status" value="1"/>
</dbReference>
<dbReference type="Gene3D" id="3.90.215.10">
    <property type="entry name" value="Gamma Fibrinogen, chain A, domain 1"/>
    <property type="match status" value="1"/>
</dbReference>
<dbReference type="InterPro" id="IPR036056">
    <property type="entry name" value="Fibrinogen-like_C"/>
</dbReference>
<dbReference type="InterPro" id="IPR014716">
    <property type="entry name" value="Fibrinogen_a/b/g_C_1"/>
</dbReference>
<dbReference type="InterPro" id="IPR002181">
    <property type="entry name" value="Fibrinogen_a/b/g_C_dom"/>
</dbReference>
<dbReference type="InterPro" id="IPR050373">
    <property type="entry name" value="Fibrinogen_C-term_domain"/>
</dbReference>
<dbReference type="InterPro" id="IPR020837">
    <property type="entry name" value="Fibrinogen_CS"/>
</dbReference>
<dbReference type="PANTHER" id="PTHR19143">
    <property type="entry name" value="FIBRINOGEN/TENASCIN/ANGIOPOEITIN"/>
    <property type="match status" value="1"/>
</dbReference>
<dbReference type="PANTHER" id="PTHR19143:SF189">
    <property type="entry name" value="FIBROLEUKIN"/>
    <property type="match status" value="1"/>
</dbReference>
<dbReference type="Pfam" id="PF00147">
    <property type="entry name" value="Fibrinogen_C"/>
    <property type="match status" value="1"/>
</dbReference>
<dbReference type="SMART" id="SM00186">
    <property type="entry name" value="FBG"/>
    <property type="match status" value="1"/>
</dbReference>
<dbReference type="SUPFAM" id="SSF56496">
    <property type="entry name" value="Fibrinogen C-terminal domain-like"/>
    <property type="match status" value="1"/>
</dbReference>
<dbReference type="PROSITE" id="PS00514">
    <property type="entry name" value="FIBRINOGEN_C_1"/>
    <property type="match status" value="1"/>
</dbReference>
<dbReference type="PROSITE" id="PS51406">
    <property type="entry name" value="FIBRINOGEN_C_2"/>
    <property type="match status" value="1"/>
</dbReference>
<comment type="function">
    <text evidence="1">May play a role in physiologic lymphocyte functions at mucosal sites.</text>
</comment>
<comment type="subunit">
    <text evidence="1">Homotetramer; disulfide-linked.</text>
</comment>
<comment type="subcellular location">
    <subcellularLocation>
        <location evidence="1">Secreted</location>
    </subcellularLocation>
</comment>